<proteinExistence type="inferred from homology"/>
<sequence>MHFYIPPPPISGFWLGPLYVHMYSVFMLAGALVLFELTNRRFIVLTGNREFTAFAVTSLLIPVILGARLWHVVSHTQMYEHQPFYKVFAIWEGGLGFIGGVFSGLICFFVIAKIKKVPPFTFLDALAPGILAALCFARLGNYFNGEVFGTETTLPWGLKLSHEGFKDLNVEKYFHPIFLYEIILNVFIIVILLVLEKRVFVKTVFPKGSVFAAFLVLYGLGRFALEPMRYNLQQNSFGLDLNYVGAAAMIIVGVLIACRHTIASGKLRNSGD</sequence>
<name>LGT_TROWT</name>
<comment type="function">
    <text evidence="1">Catalyzes the transfer of the diacylglyceryl group from phosphatidylglycerol to the sulfhydryl group of the N-terminal cysteine of a prolipoprotein, the first step in the formation of mature lipoproteins.</text>
</comment>
<comment type="catalytic activity">
    <reaction evidence="1">
        <text>L-cysteinyl-[prolipoprotein] + a 1,2-diacyl-sn-glycero-3-phospho-(1'-sn-glycerol) = an S-1,2-diacyl-sn-glyceryl-L-cysteinyl-[prolipoprotein] + sn-glycerol 1-phosphate + H(+)</text>
        <dbReference type="Rhea" id="RHEA:56712"/>
        <dbReference type="Rhea" id="RHEA-COMP:14679"/>
        <dbReference type="Rhea" id="RHEA-COMP:14680"/>
        <dbReference type="ChEBI" id="CHEBI:15378"/>
        <dbReference type="ChEBI" id="CHEBI:29950"/>
        <dbReference type="ChEBI" id="CHEBI:57685"/>
        <dbReference type="ChEBI" id="CHEBI:64716"/>
        <dbReference type="ChEBI" id="CHEBI:140658"/>
        <dbReference type="EC" id="2.5.1.145"/>
    </reaction>
</comment>
<comment type="pathway">
    <text evidence="1">Protein modification; lipoprotein biosynthesis (diacylglyceryl transfer).</text>
</comment>
<comment type="subcellular location">
    <subcellularLocation>
        <location evidence="1">Cell membrane</location>
        <topology evidence="1">Multi-pass membrane protein</topology>
    </subcellularLocation>
</comment>
<comment type="similarity">
    <text evidence="1">Belongs to the Lgt family.</text>
</comment>
<keyword id="KW-1003">Cell membrane</keyword>
<keyword id="KW-0472">Membrane</keyword>
<keyword id="KW-1185">Reference proteome</keyword>
<keyword id="KW-0808">Transferase</keyword>
<keyword id="KW-0812">Transmembrane</keyword>
<keyword id="KW-1133">Transmembrane helix</keyword>
<protein>
    <recommendedName>
        <fullName evidence="1">Phosphatidylglycerol--prolipoprotein diacylglyceryl transferase</fullName>
        <ecNumber evidence="1">2.5.1.145</ecNumber>
    </recommendedName>
</protein>
<feature type="chain" id="PRO_0000172708" description="Phosphatidylglycerol--prolipoprotein diacylglyceryl transferase">
    <location>
        <begin position="1"/>
        <end position="272"/>
    </location>
</feature>
<feature type="transmembrane region" description="Helical" evidence="1">
    <location>
        <begin position="15"/>
        <end position="35"/>
    </location>
</feature>
<feature type="transmembrane region" description="Helical" evidence="1">
    <location>
        <begin position="53"/>
        <end position="73"/>
    </location>
</feature>
<feature type="transmembrane region" description="Helical" evidence="1">
    <location>
        <begin position="90"/>
        <end position="110"/>
    </location>
</feature>
<feature type="transmembrane region" description="Helical" evidence="1">
    <location>
        <begin position="117"/>
        <end position="137"/>
    </location>
</feature>
<feature type="transmembrane region" description="Helical" evidence="1">
    <location>
        <begin position="174"/>
        <end position="194"/>
    </location>
</feature>
<feature type="transmembrane region" description="Helical" evidence="1">
    <location>
        <begin position="199"/>
        <end position="219"/>
    </location>
</feature>
<feature type="transmembrane region" description="Helical" evidence="1">
    <location>
        <begin position="237"/>
        <end position="257"/>
    </location>
</feature>
<feature type="binding site" evidence="1">
    <location>
        <position position="138"/>
    </location>
    <ligand>
        <name>a 1,2-diacyl-sn-glycero-3-phospho-(1'-sn-glycerol)</name>
        <dbReference type="ChEBI" id="CHEBI:64716"/>
    </ligand>
</feature>
<organism>
    <name type="scientific">Tropheryma whipplei (strain Twist)</name>
    <name type="common">Whipple's bacillus</name>
    <dbReference type="NCBI Taxonomy" id="203267"/>
    <lineage>
        <taxon>Bacteria</taxon>
        <taxon>Bacillati</taxon>
        <taxon>Actinomycetota</taxon>
        <taxon>Actinomycetes</taxon>
        <taxon>Micrococcales</taxon>
        <taxon>Tropherymataceae</taxon>
        <taxon>Tropheryma</taxon>
    </lineage>
</organism>
<reference key="1">
    <citation type="journal article" date="2003" name="Genome Res.">
        <title>Tropheryma whipplei twist: a human pathogenic Actinobacteria with a reduced genome.</title>
        <authorList>
            <person name="Raoult D."/>
            <person name="Ogata H."/>
            <person name="Audic S."/>
            <person name="Robert C."/>
            <person name="Suhre K."/>
            <person name="Drancourt M."/>
            <person name="Claverie J.-M."/>
        </authorList>
    </citation>
    <scope>NUCLEOTIDE SEQUENCE [LARGE SCALE GENOMIC DNA]</scope>
    <source>
        <strain>Twist</strain>
    </source>
</reference>
<dbReference type="EC" id="2.5.1.145" evidence="1"/>
<dbReference type="EMBL" id="AE014184">
    <property type="protein sequence ID" value="AAO44406.1"/>
    <property type="molecule type" value="Genomic_DNA"/>
</dbReference>
<dbReference type="RefSeq" id="WP_011102495.1">
    <property type="nucleotide sequence ID" value="NC_004572.3"/>
</dbReference>
<dbReference type="SMR" id="Q820B8"/>
<dbReference type="STRING" id="203267.TWT_309"/>
<dbReference type="KEGG" id="twh:TWT_309"/>
<dbReference type="eggNOG" id="COG0682">
    <property type="taxonomic scope" value="Bacteria"/>
</dbReference>
<dbReference type="HOGENOM" id="CLU_013386_1_0_11"/>
<dbReference type="OrthoDB" id="871140at2"/>
<dbReference type="UniPathway" id="UPA00664"/>
<dbReference type="Proteomes" id="UP000002200">
    <property type="component" value="Chromosome"/>
</dbReference>
<dbReference type="GO" id="GO:0005886">
    <property type="term" value="C:plasma membrane"/>
    <property type="evidence" value="ECO:0007669"/>
    <property type="project" value="UniProtKB-SubCell"/>
</dbReference>
<dbReference type="GO" id="GO:0008961">
    <property type="term" value="F:phosphatidylglycerol-prolipoprotein diacylglyceryl transferase activity"/>
    <property type="evidence" value="ECO:0007669"/>
    <property type="project" value="UniProtKB-UniRule"/>
</dbReference>
<dbReference type="GO" id="GO:0042158">
    <property type="term" value="P:lipoprotein biosynthetic process"/>
    <property type="evidence" value="ECO:0007669"/>
    <property type="project" value="UniProtKB-UniRule"/>
</dbReference>
<dbReference type="HAMAP" id="MF_01147">
    <property type="entry name" value="Lgt"/>
    <property type="match status" value="1"/>
</dbReference>
<dbReference type="InterPro" id="IPR001640">
    <property type="entry name" value="Lgt"/>
</dbReference>
<dbReference type="NCBIfam" id="TIGR00544">
    <property type="entry name" value="lgt"/>
    <property type="match status" value="1"/>
</dbReference>
<dbReference type="PANTHER" id="PTHR30589:SF0">
    <property type="entry name" value="PHOSPHATIDYLGLYCEROL--PROLIPOPROTEIN DIACYLGLYCERYL TRANSFERASE"/>
    <property type="match status" value="1"/>
</dbReference>
<dbReference type="PANTHER" id="PTHR30589">
    <property type="entry name" value="PROLIPOPROTEIN DIACYLGLYCERYL TRANSFERASE"/>
    <property type="match status" value="1"/>
</dbReference>
<dbReference type="Pfam" id="PF01790">
    <property type="entry name" value="LGT"/>
    <property type="match status" value="1"/>
</dbReference>
<evidence type="ECO:0000255" key="1">
    <source>
        <dbReference type="HAMAP-Rule" id="MF_01147"/>
    </source>
</evidence>
<gene>
    <name evidence="1" type="primary">lgt</name>
    <name type="ordered locus">TWT_309</name>
</gene>
<accession>Q820B8</accession>